<sequence>MIIPAIDLIEGQVVRLYQGDYAQKTTFDLSPLSQLKSYEAQGANWLHIVDLTGAKDPNARQTRLIAGLVSGLDANIQVGGGIRTEAQLAELLEIGVKRVVIGSLAVKETALVQSWFKKYGADAICLALDVNINEQGEKIVAVSGWQSGGGKSLESLVDAFKPYGLKHALVTDISRDGTLKGANTDLYREIAAAYPDINWQASGGIATLDDVAAVRDSGADGIIIGKALLIENFTVREAIQCWPNPQ</sequence>
<proteinExistence type="inferred from homology"/>
<dbReference type="EC" id="5.3.1.16" evidence="1"/>
<dbReference type="EMBL" id="CP000821">
    <property type="protein sequence ID" value="ABV37153.1"/>
    <property type="molecule type" value="Genomic_DNA"/>
</dbReference>
<dbReference type="RefSeq" id="WP_012142886.1">
    <property type="nucleotide sequence ID" value="NC_009831.1"/>
</dbReference>
<dbReference type="SMR" id="A8FWD0"/>
<dbReference type="STRING" id="425104.Ssed_2546"/>
<dbReference type="KEGG" id="sse:Ssed_2546"/>
<dbReference type="eggNOG" id="COG0106">
    <property type="taxonomic scope" value="Bacteria"/>
</dbReference>
<dbReference type="HOGENOM" id="CLU_048577_1_2_6"/>
<dbReference type="OrthoDB" id="9807749at2"/>
<dbReference type="UniPathway" id="UPA00031">
    <property type="reaction ID" value="UER00009"/>
</dbReference>
<dbReference type="Proteomes" id="UP000002015">
    <property type="component" value="Chromosome"/>
</dbReference>
<dbReference type="GO" id="GO:0005737">
    <property type="term" value="C:cytoplasm"/>
    <property type="evidence" value="ECO:0007669"/>
    <property type="project" value="UniProtKB-SubCell"/>
</dbReference>
<dbReference type="GO" id="GO:0003949">
    <property type="term" value="F:1-(5-phosphoribosyl)-5-[(5-phosphoribosylamino)methylideneamino]imidazole-4-carboxamide isomerase activity"/>
    <property type="evidence" value="ECO:0007669"/>
    <property type="project" value="UniProtKB-UniRule"/>
</dbReference>
<dbReference type="GO" id="GO:0000105">
    <property type="term" value="P:L-histidine biosynthetic process"/>
    <property type="evidence" value="ECO:0007669"/>
    <property type="project" value="UniProtKB-UniRule"/>
</dbReference>
<dbReference type="GO" id="GO:0000162">
    <property type="term" value="P:L-tryptophan biosynthetic process"/>
    <property type="evidence" value="ECO:0007669"/>
    <property type="project" value="TreeGrafter"/>
</dbReference>
<dbReference type="CDD" id="cd04732">
    <property type="entry name" value="HisA"/>
    <property type="match status" value="1"/>
</dbReference>
<dbReference type="FunFam" id="3.20.20.70:FF:000009">
    <property type="entry name" value="1-(5-phosphoribosyl)-5-[(5-phosphoribosylamino)methylideneamino] imidazole-4-carboxamide isomerase"/>
    <property type="match status" value="1"/>
</dbReference>
<dbReference type="Gene3D" id="3.20.20.70">
    <property type="entry name" value="Aldolase class I"/>
    <property type="match status" value="1"/>
</dbReference>
<dbReference type="HAMAP" id="MF_01014">
    <property type="entry name" value="HisA"/>
    <property type="match status" value="1"/>
</dbReference>
<dbReference type="InterPro" id="IPR013785">
    <property type="entry name" value="Aldolase_TIM"/>
</dbReference>
<dbReference type="InterPro" id="IPR006062">
    <property type="entry name" value="His_biosynth"/>
</dbReference>
<dbReference type="InterPro" id="IPR006063">
    <property type="entry name" value="HisA_bact_arch"/>
</dbReference>
<dbReference type="InterPro" id="IPR044524">
    <property type="entry name" value="Isoase_HisA-like"/>
</dbReference>
<dbReference type="InterPro" id="IPR023016">
    <property type="entry name" value="Isoase_HisA-like_bact"/>
</dbReference>
<dbReference type="InterPro" id="IPR011060">
    <property type="entry name" value="RibuloseP-bd_barrel"/>
</dbReference>
<dbReference type="NCBIfam" id="TIGR00007">
    <property type="entry name" value="1-(5-phosphoribosyl)-5-[(5-phosphoribosylamino)methylideneamino]imidazole-4-carboxamide isomerase"/>
    <property type="match status" value="1"/>
</dbReference>
<dbReference type="PANTHER" id="PTHR43090">
    <property type="entry name" value="1-(5-PHOSPHORIBOSYL)-5-[(5-PHOSPHORIBOSYLAMINO)METHYLIDENEAMINO] IMIDAZOLE-4-CARBOXAMIDE ISOMERASE"/>
    <property type="match status" value="1"/>
</dbReference>
<dbReference type="PANTHER" id="PTHR43090:SF2">
    <property type="entry name" value="1-(5-PHOSPHORIBOSYL)-5-[(5-PHOSPHORIBOSYLAMINO)METHYLIDENEAMINO] IMIDAZOLE-4-CARBOXAMIDE ISOMERASE"/>
    <property type="match status" value="1"/>
</dbReference>
<dbReference type="Pfam" id="PF00977">
    <property type="entry name" value="His_biosynth"/>
    <property type="match status" value="1"/>
</dbReference>
<dbReference type="SUPFAM" id="SSF51366">
    <property type="entry name" value="Ribulose-phoshate binding barrel"/>
    <property type="match status" value="1"/>
</dbReference>
<accession>A8FWD0</accession>
<keyword id="KW-0028">Amino-acid biosynthesis</keyword>
<keyword id="KW-0963">Cytoplasm</keyword>
<keyword id="KW-0368">Histidine biosynthesis</keyword>
<keyword id="KW-0413">Isomerase</keyword>
<keyword id="KW-1185">Reference proteome</keyword>
<protein>
    <recommendedName>
        <fullName evidence="1">1-(5-phosphoribosyl)-5-[(5-phosphoribosylamino)methylideneamino] imidazole-4-carboxamide isomerase</fullName>
        <ecNumber evidence="1">5.3.1.16</ecNumber>
    </recommendedName>
    <alternativeName>
        <fullName evidence="1">Phosphoribosylformimino-5-aminoimidazole carboxamide ribotide isomerase</fullName>
    </alternativeName>
</protein>
<comment type="catalytic activity">
    <reaction evidence="1">
        <text>1-(5-phospho-beta-D-ribosyl)-5-[(5-phospho-beta-D-ribosylamino)methylideneamino]imidazole-4-carboxamide = 5-[(5-phospho-1-deoxy-D-ribulos-1-ylimino)methylamino]-1-(5-phospho-beta-D-ribosyl)imidazole-4-carboxamide</text>
        <dbReference type="Rhea" id="RHEA:15469"/>
        <dbReference type="ChEBI" id="CHEBI:58435"/>
        <dbReference type="ChEBI" id="CHEBI:58525"/>
        <dbReference type="EC" id="5.3.1.16"/>
    </reaction>
</comment>
<comment type="pathway">
    <text evidence="1">Amino-acid biosynthesis; L-histidine biosynthesis; L-histidine from 5-phospho-alpha-D-ribose 1-diphosphate: step 4/9.</text>
</comment>
<comment type="subcellular location">
    <subcellularLocation>
        <location evidence="1">Cytoplasm</location>
    </subcellularLocation>
</comment>
<comment type="similarity">
    <text evidence="1">Belongs to the HisA/HisF family.</text>
</comment>
<organism>
    <name type="scientific">Shewanella sediminis (strain HAW-EB3)</name>
    <dbReference type="NCBI Taxonomy" id="425104"/>
    <lineage>
        <taxon>Bacteria</taxon>
        <taxon>Pseudomonadati</taxon>
        <taxon>Pseudomonadota</taxon>
        <taxon>Gammaproteobacteria</taxon>
        <taxon>Alteromonadales</taxon>
        <taxon>Shewanellaceae</taxon>
        <taxon>Shewanella</taxon>
    </lineage>
</organism>
<reference key="1">
    <citation type="submission" date="2007-08" db="EMBL/GenBank/DDBJ databases">
        <title>Complete sequence of Shewanella sediminis HAW-EB3.</title>
        <authorList>
            <consortium name="US DOE Joint Genome Institute"/>
            <person name="Copeland A."/>
            <person name="Lucas S."/>
            <person name="Lapidus A."/>
            <person name="Barry K."/>
            <person name="Glavina del Rio T."/>
            <person name="Dalin E."/>
            <person name="Tice H."/>
            <person name="Pitluck S."/>
            <person name="Chertkov O."/>
            <person name="Brettin T."/>
            <person name="Bruce D."/>
            <person name="Detter J.C."/>
            <person name="Han C."/>
            <person name="Schmutz J."/>
            <person name="Larimer F."/>
            <person name="Land M."/>
            <person name="Hauser L."/>
            <person name="Kyrpides N."/>
            <person name="Kim E."/>
            <person name="Zhao J.-S."/>
            <person name="Richardson P."/>
        </authorList>
    </citation>
    <scope>NUCLEOTIDE SEQUENCE [LARGE SCALE GENOMIC DNA]</scope>
    <source>
        <strain>HAW-EB3</strain>
    </source>
</reference>
<feature type="chain" id="PRO_1000084115" description="1-(5-phosphoribosyl)-5-[(5-phosphoribosylamino)methylideneamino] imidazole-4-carboxamide isomerase">
    <location>
        <begin position="1"/>
        <end position="246"/>
    </location>
</feature>
<feature type="active site" description="Proton acceptor" evidence="1">
    <location>
        <position position="7"/>
    </location>
</feature>
<feature type="active site" description="Proton donor" evidence="1">
    <location>
        <position position="129"/>
    </location>
</feature>
<evidence type="ECO:0000255" key="1">
    <source>
        <dbReference type="HAMAP-Rule" id="MF_01014"/>
    </source>
</evidence>
<name>HIS4_SHESH</name>
<gene>
    <name evidence="1" type="primary">hisA</name>
    <name type="ordered locus">Ssed_2546</name>
</gene>